<keyword id="KW-0021">Allosteric enzyme</keyword>
<keyword id="KW-0067">ATP-binding</keyword>
<keyword id="KW-0215">Deoxyribonucleotide synthesis</keyword>
<keyword id="KW-1015">Disulfide bond</keyword>
<keyword id="KW-0547">Nucleotide-binding</keyword>
<keyword id="KW-0560">Oxidoreductase</keyword>
<keyword id="KW-1185">Reference proteome</keyword>
<name>RIR1_SCHPO</name>
<feature type="chain" id="PRO_0000187201" description="Ribonucleoside-diphosphate reductase large chain">
    <location>
        <begin position="1"/>
        <end position="811"/>
    </location>
</feature>
<feature type="domain" description="ATP-cone" evidence="3">
    <location>
        <begin position="1"/>
        <end position="92"/>
    </location>
</feature>
<feature type="active site" description="Proton acceptor" evidence="1">
    <location>
        <position position="427"/>
    </location>
</feature>
<feature type="active site" description="Cysteine radical intermediate" evidence="1">
    <location>
        <position position="429"/>
    </location>
</feature>
<feature type="active site" description="Proton acceptor" evidence="1">
    <location>
        <position position="431"/>
    </location>
</feature>
<feature type="binding site" evidence="2">
    <location>
        <begin position="5"/>
        <end position="6"/>
    </location>
    <ligand>
        <name>ATP</name>
        <dbReference type="ChEBI" id="CHEBI:30616"/>
        <note>allosteric activator</note>
    </ligand>
</feature>
<feature type="binding site" evidence="2">
    <location>
        <begin position="11"/>
        <end position="17"/>
    </location>
    <ligand>
        <name>ATP</name>
        <dbReference type="ChEBI" id="CHEBI:30616"/>
        <note>allosteric activator</note>
    </ligand>
</feature>
<feature type="binding site" evidence="2">
    <location>
        <position position="53"/>
    </location>
    <ligand>
        <name>ATP</name>
        <dbReference type="ChEBI" id="CHEBI:30616"/>
        <note>allosteric activator</note>
    </ligand>
</feature>
<feature type="binding site" evidence="2">
    <location>
        <position position="57"/>
    </location>
    <ligand>
        <name>ATP</name>
        <dbReference type="ChEBI" id="CHEBI:30616"/>
        <note>allosteric activator</note>
    </ligand>
</feature>
<feature type="binding site" evidence="2">
    <location>
        <position position="202"/>
    </location>
    <ligand>
        <name>GDP</name>
        <dbReference type="ChEBI" id="CHEBI:58189"/>
    </ligand>
</feature>
<feature type="binding site" evidence="2">
    <location>
        <position position="217"/>
    </location>
    <ligand>
        <name>GDP</name>
        <dbReference type="ChEBI" id="CHEBI:58189"/>
    </ligand>
</feature>
<feature type="binding site" evidence="2">
    <location>
        <begin position="226"/>
        <end position="228"/>
    </location>
    <ligand>
        <name>dTTP</name>
        <dbReference type="ChEBI" id="CHEBI:37568"/>
        <note>allosteric effector that controls substrate specificity</note>
    </ligand>
</feature>
<feature type="binding site" evidence="2">
    <location>
        <position position="243"/>
    </location>
    <ligand>
        <name>dTTP</name>
        <dbReference type="ChEBI" id="CHEBI:37568"/>
        <note>allosteric effector that controls substrate specificity</note>
    </ligand>
</feature>
<feature type="binding site" evidence="2">
    <location>
        <position position="256"/>
    </location>
    <ligand>
        <name>dTTP</name>
        <dbReference type="ChEBI" id="CHEBI:37568"/>
        <note>allosteric effector that controls substrate specificity</note>
    </ligand>
</feature>
<feature type="binding site" evidence="2">
    <location>
        <begin position="263"/>
        <end position="264"/>
    </location>
    <ligand>
        <name>dTTP</name>
        <dbReference type="ChEBI" id="CHEBI:37568"/>
        <note>allosteric effector that controls substrate specificity</note>
    </ligand>
</feature>
<feature type="binding site" evidence="2">
    <location>
        <position position="427"/>
    </location>
    <ligand>
        <name>GDP</name>
        <dbReference type="ChEBI" id="CHEBI:58189"/>
    </ligand>
</feature>
<feature type="binding site" evidence="2">
    <location>
        <position position="431"/>
    </location>
    <ligand>
        <name>GDP</name>
        <dbReference type="ChEBI" id="CHEBI:58189"/>
    </ligand>
</feature>
<feature type="binding site" evidence="2">
    <location>
        <begin position="603"/>
        <end position="606"/>
    </location>
    <ligand>
        <name>GDP</name>
        <dbReference type="ChEBI" id="CHEBI:58189"/>
    </ligand>
</feature>
<feature type="site" description="Important for hydrogen atom transfer" evidence="1">
    <location>
        <position position="218"/>
    </location>
</feature>
<feature type="site" description="Important for hydrogen atom transfer" evidence="1">
    <location>
        <position position="444"/>
    </location>
</feature>
<feature type="site" description="Important for electron transfer" evidence="1">
    <location>
        <position position="736"/>
    </location>
</feature>
<feature type="site" description="Important for electron transfer" evidence="1">
    <location>
        <position position="737"/>
    </location>
</feature>
<feature type="site" description="Interacts with thioredoxin/glutaredoxin" evidence="1">
    <location>
        <position position="806"/>
    </location>
</feature>
<feature type="site" description="Interacts with thioredoxin/glutaredoxin" evidence="1">
    <location>
        <position position="809"/>
    </location>
</feature>
<feature type="disulfide bond" description="Redox-active" evidence="1">
    <location>
        <begin position="218"/>
        <end position="444"/>
    </location>
</feature>
<feature type="sequence conflict" description="In Ref. 1; CAA46232." evidence="6" ref="1">
    <original>N</original>
    <variation>Y</variation>
    <location>
        <position position="251"/>
    </location>
</feature>
<feature type="sequence conflict" description="In Ref. 1; CAA46232." evidence="6" ref="1">
    <original>E</original>
    <variation>Q</variation>
    <location>
        <position position="327"/>
    </location>
</feature>
<feature type="sequence conflict" description="In Ref. 1; CAA46232." evidence="6" ref="1">
    <original>C</original>
    <variation>S</variation>
    <location>
        <position position="425"/>
    </location>
</feature>
<feature type="sequence conflict" description="In Ref. 1; CAA46232." evidence="6" ref="1">
    <original>AS</original>
    <variation>CI</variation>
    <location>
        <begin position="560"/>
        <end position="561"/>
    </location>
</feature>
<feature type="sequence conflict" description="In Ref. 1; CAA46232." evidence="6" ref="1">
    <original>L</original>
    <variation>F</variation>
    <location>
        <position position="583"/>
    </location>
</feature>
<accession>P36602</accession>
<evidence type="ECO:0000250" key="1"/>
<evidence type="ECO:0000250" key="2">
    <source>
        <dbReference type="UniProtKB" id="P23921"/>
    </source>
</evidence>
<evidence type="ECO:0000255" key="3">
    <source>
        <dbReference type="PROSITE-ProRule" id="PRU00492"/>
    </source>
</evidence>
<evidence type="ECO:0000269" key="4">
    <source>
    </source>
</evidence>
<evidence type="ECO:0000269" key="5">
    <source>
    </source>
</evidence>
<evidence type="ECO:0000305" key="6"/>
<comment type="function">
    <text evidence="4">Provides the precursors necessary for DNA synthesis. Catalyzes the biosynthesis of deoxyribonucleotides from the corresponding ribonucleotides.</text>
</comment>
<comment type="catalytic activity">
    <reaction>
        <text>a 2'-deoxyribonucleoside 5'-diphosphate + [thioredoxin]-disulfide + H2O = a ribonucleoside 5'-diphosphate + [thioredoxin]-dithiol</text>
        <dbReference type="Rhea" id="RHEA:23252"/>
        <dbReference type="Rhea" id="RHEA-COMP:10698"/>
        <dbReference type="Rhea" id="RHEA-COMP:10700"/>
        <dbReference type="ChEBI" id="CHEBI:15377"/>
        <dbReference type="ChEBI" id="CHEBI:29950"/>
        <dbReference type="ChEBI" id="CHEBI:50058"/>
        <dbReference type="ChEBI" id="CHEBI:57930"/>
        <dbReference type="ChEBI" id="CHEBI:73316"/>
        <dbReference type="EC" id="1.17.4.1"/>
    </reaction>
</comment>
<comment type="activity regulation">
    <text evidence="1">Under complex allosteric control mediated by deoxynucleoside triphosphates and ATP binding to separate specificity and activation sites on the large subunit. The type of nucleotide bound at the specificity site determines substrate preference. It seems probable that ATP makes the enzyme reduce CDP and UDP, dGTP favors ADP reduction and dTTP favors GDP reduction. Stimulated by ATP and inhibited by dATP binding to the activity site (By similarity).</text>
</comment>
<comment type="subunit">
    <text evidence="4 5">Heterodimer of a large and a small subunit. Interacts with SPD1.</text>
</comment>
<comment type="similarity">
    <text evidence="6">Belongs to the ribonucleoside diphosphate reductase large chain family.</text>
</comment>
<protein>
    <recommendedName>
        <fullName>Ribonucleoside-diphosphate reductase large chain</fullName>
        <ecNumber>1.17.4.1</ecNumber>
    </recommendedName>
    <alternativeName>
        <fullName>Ribonucleotide reductase</fullName>
    </alternativeName>
</protein>
<dbReference type="EC" id="1.17.4.1"/>
<dbReference type="EMBL" id="X65116">
    <property type="protein sequence ID" value="CAA46232.1"/>
    <property type="molecule type" value="Genomic_DNA"/>
</dbReference>
<dbReference type="EMBL" id="CU329670">
    <property type="protein sequence ID" value="CAA91952.1"/>
    <property type="molecule type" value="Genomic_DNA"/>
</dbReference>
<dbReference type="PIR" id="S34807">
    <property type="entry name" value="S34807"/>
</dbReference>
<dbReference type="PIR" id="S62577">
    <property type="entry name" value="S62577"/>
</dbReference>
<dbReference type="RefSeq" id="NP_594491.1">
    <property type="nucleotide sequence ID" value="NM_001019920.2"/>
</dbReference>
<dbReference type="SMR" id="P36602"/>
<dbReference type="BioGRID" id="278191">
    <property type="interactions" value="30"/>
</dbReference>
<dbReference type="FunCoup" id="P36602">
    <property type="interactions" value="714"/>
</dbReference>
<dbReference type="IntAct" id="P36602">
    <property type="interactions" value="1"/>
</dbReference>
<dbReference type="STRING" id="284812.P36602"/>
<dbReference type="iPTMnet" id="P36602"/>
<dbReference type="PaxDb" id="4896-SPAC1F7.05.1"/>
<dbReference type="EnsemblFungi" id="SPAC1F7.05.1">
    <property type="protein sequence ID" value="SPAC1F7.05.1:pep"/>
    <property type="gene ID" value="SPAC1F7.05"/>
</dbReference>
<dbReference type="GeneID" id="2541695"/>
<dbReference type="KEGG" id="spo:2541695"/>
<dbReference type="PomBase" id="SPAC1F7.05">
    <property type="gene designation" value="cdc22"/>
</dbReference>
<dbReference type="VEuPathDB" id="FungiDB:SPAC1F7.05"/>
<dbReference type="eggNOG" id="KOG1112">
    <property type="taxonomic scope" value="Eukaryota"/>
</dbReference>
<dbReference type="HOGENOM" id="CLU_000404_1_2_1"/>
<dbReference type="InParanoid" id="P36602"/>
<dbReference type="OMA" id="IELPQHM"/>
<dbReference type="PhylomeDB" id="P36602"/>
<dbReference type="Reactome" id="R-SPO-499943">
    <property type="pathway name" value="Interconversion of nucleotide di- and triphosphates"/>
</dbReference>
<dbReference type="PRO" id="PR:P36602"/>
<dbReference type="Proteomes" id="UP000002485">
    <property type="component" value="Chromosome I"/>
</dbReference>
<dbReference type="ExpressionAtlas" id="P36602">
    <property type="expression patterns" value="differential"/>
</dbReference>
<dbReference type="GO" id="GO:0005737">
    <property type="term" value="C:cytoplasm"/>
    <property type="evidence" value="ECO:0007005"/>
    <property type="project" value="PomBase"/>
</dbReference>
<dbReference type="GO" id="GO:0005829">
    <property type="term" value="C:cytosol"/>
    <property type="evidence" value="ECO:0007005"/>
    <property type="project" value="PomBase"/>
</dbReference>
<dbReference type="GO" id="GO:0005971">
    <property type="term" value="C:ribonucleoside-diphosphate reductase complex"/>
    <property type="evidence" value="ECO:0000353"/>
    <property type="project" value="PomBase"/>
</dbReference>
<dbReference type="GO" id="GO:0005524">
    <property type="term" value="F:ATP binding"/>
    <property type="evidence" value="ECO:0000318"/>
    <property type="project" value="GO_Central"/>
</dbReference>
<dbReference type="GO" id="GO:0004748">
    <property type="term" value="F:ribonucleoside-diphosphate reductase activity, thioredoxin disulfide as acceptor"/>
    <property type="evidence" value="ECO:0000250"/>
    <property type="project" value="UniProtKB"/>
</dbReference>
<dbReference type="GO" id="GO:0046704">
    <property type="term" value="P:CDP metabolic process"/>
    <property type="evidence" value="ECO:0000314"/>
    <property type="project" value="PomBase"/>
</dbReference>
<dbReference type="GO" id="GO:0006240">
    <property type="term" value="P:dCDP biosynthetic process"/>
    <property type="evidence" value="ECO:0000314"/>
    <property type="project" value="PomBase"/>
</dbReference>
<dbReference type="GO" id="GO:0009263">
    <property type="term" value="P:deoxyribonucleotide biosynthetic process"/>
    <property type="evidence" value="ECO:0000250"/>
    <property type="project" value="UniProtKB"/>
</dbReference>
<dbReference type="GO" id="GO:0006235">
    <property type="term" value="P:dTTP biosynthetic process"/>
    <property type="evidence" value="ECO:0000315"/>
    <property type="project" value="PomBase"/>
</dbReference>
<dbReference type="CDD" id="cd01679">
    <property type="entry name" value="RNR_I"/>
    <property type="match status" value="1"/>
</dbReference>
<dbReference type="FunFam" id="3.20.70.20:FF:000001">
    <property type="entry name" value="Ribonucleoside-diphosphate reductase"/>
    <property type="match status" value="1"/>
</dbReference>
<dbReference type="Gene3D" id="3.20.70.20">
    <property type="match status" value="1"/>
</dbReference>
<dbReference type="InterPro" id="IPR005144">
    <property type="entry name" value="ATP-cone_dom"/>
</dbReference>
<dbReference type="InterPro" id="IPR013346">
    <property type="entry name" value="NrdE_NrdA_C"/>
</dbReference>
<dbReference type="InterPro" id="IPR000788">
    <property type="entry name" value="RNR_lg_C"/>
</dbReference>
<dbReference type="InterPro" id="IPR013509">
    <property type="entry name" value="RNR_lsu_N"/>
</dbReference>
<dbReference type="InterPro" id="IPR008926">
    <property type="entry name" value="RNR_R1-su_N"/>
</dbReference>
<dbReference type="InterPro" id="IPR039718">
    <property type="entry name" value="Rrm1"/>
</dbReference>
<dbReference type="NCBIfam" id="TIGR02506">
    <property type="entry name" value="NrdE_NrdA"/>
    <property type="match status" value="1"/>
</dbReference>
<dbReference type="PANTHER" id="PTHR11573">
    <property type="entry name" value="RIBONUCLEOSIDE-DIPHOSPHATE REDUCTASE LARGE CHAIN"/>
    <property type="match status" value="1"/>
</dbReference>
<dbReference type="PANTHER" id="PTHR11573:SF6">
    <property type="entry name" value="RIBONUCLEOSIDE-DIPHOSPHATE REDUCTASE LARGE SUBUNIT"/>
    <property type="match status" value="1"/>
</dbReference>
<dbReference type="Pfam" id="PF03477">
    <property type="entry name" value="ATP-cone"/>
    <property type="match status" value="1"/>
</dbReference>
<dbReference type="Pfam" id="PF02867">
    <property type="entry name" value="Ribonuc_red_lgC"/>
    <property type="match status" value="1"/>
</dbReference>
<dbReference type="Pfam" id="PF00317">
    <property type="entry name" value="Ribonuc_red_lgN"/>
    <property type="match status" value="1"/>
</dbReference>
<dbReference type="PRINTS" id="PR01183">
    <property type="entry name" value="RIBORDTASEM1"/>
</dbReference>
<dbReference type="SUPFAM" id="SSF51998">
    <property type="entry name" value="PFL-like glycyl radical enzymes"/>
    <property type="match status" value="1"/>
</dbReference>
<dbReference type="SUPFAM" id="SSF48168">
    <property type="entry name" value="R1 subunit of ribonucleotide reductase, N-terminal domain"/>
    <property type="match status" value="1"/>
</dbReference>
<dbReference type="PROSITE" id="PS51161">
    <property type="entry name" value="ATP_CONE"/>
    <property type="match status" value="1"/>
</dbReference>
<dbReference type="PROSITE" id="PS00089">
    <property type="entry name" value="RIBORED_LARGE"/>
    <property type="match status" value="1"/>
</dbReference>
<reference key="1">
    <citation type="journal article" date="1993" name="Mol. Gen. Genet.">
        <title>The cell cycle genes cdc22+ and suc22+ of the fission yeast Schizosaccharomyces pombe encode the large and small subunits of ribonucleotide reductase.</title>
        <authorList>
            <person name="Fernandez-Sarabia M.J."/>
            <person name="McInerny C."/>
            <person name="Harris P."/>
            <person name="Gordon C."/>
            <person name="Fantes P."/>
        </authorList>
    </citation>
    <scope>NUCLEOTIDE SEQUENCE [GENOMIC DNA]</scope>
    <source>
        <strain>972 / ATCC 24843</strain>
    </source>
</reference>
<reference key="2">
    <citation type="journal article" date="2002" name="Nature">
        <title>The genome sequence of Schizosaccharomyces pombe.</title>
        <authorList>
            <person name="Wood V."/>
            <person name="Gwilliam R."/>
            <person name="Rajandream M.A."/>
            <person name="Lyne M.H."/>
            <person name="Lyne R."/>
            <person name="Stewart A."/>
            <person name="Sgouros J.G."/>
            <person name="Peat N."/>
            <person name="Hayles J."/>
            <person name="Baker S.G."/>
            <person name="Basham D."/>
            <person name="Bowman S."/>
            <person name="Brooks K."/>
            <person name="Brown D."/>
            <person name="Brown S."/>
            <person name="Chillingworth T."/>
            <person name="Churcher C.M."/>
            <person name="Collins M."/>
            <person name="Connor R."/>
            <person name="Cronin A."/>
            <person name="Davis P."/>
            <person name="Feltwell T."/>
            <person name="Fraser A."/>
            <person name="Gentles S."/>
            <person name="Goble A."/>
            <person name="Hamlin N."/>
            <person name="Harris D.E."/>
            <person name="Hidalgo J."/>
            <person name="Hodgson G."/>
            <person name="Holroyd S."/>
            <person name="Hornsby T."/>
            <person name="Howarth S."/>
            <person name="Huckle E.J."/>
            <person name="Hunt S."/>
            <person name="Jagels K."/>
            <person name="James K.D."/>
            <person name="Jones L."/>
            <person name="Jones M."/>
            <person name="Leather S."/>
            <person name="McDonald S."/>
            <person name="McLean J."/>
            <person name="Mooney P."/>
            <person name="Moule S."/>
            <person name="Mungall K.L."/>
            <person name="Murphy L.D."/>
            <person name="Niblett D."/>
            <person name="Odell C."/>
            <person name="Oliver K."/>
            <person name="O'Neil S."/>
            <person name="Pearson D."/>
            <person name="Quail M.A."/>
            <person name="Rabbinowitsch E."/>
            <person name="Rutherford K.M."/>
            <person name="Rutter S."/>
            <person name="Saunders D."/>
            <person name="Seeger K."/>
            <person name="Sharp S."/>
            <person name="Skelton J."/>
            <person name="Simmonds M.N."/>
            <person name="Squares R."/>
            <person name="Squares S."/>
            <person name="Stevens K."/>
            <person name="Taylor K."/>
            <person name="Taylor R.G."/>
            <person name="Tivey A."/>
            <person name="Walsh S.V."/>
            <person name="Warren T."/>
            <person name="Whitehead S."/>
            <person name="Woodward J.R."/>
            <person name="Volckaert G."/>
            <person name="Aert R."/>
            <person name="Robben J."/>
            <person name="Grymonprez B."/>
            <person name="Weltjens I."/>
            <person name="Vanstreels E."/>
            <person name="Rieger M."/>
            <person name="Schaefer M."/>
            <person name="Mueller-Auer S."/>
            <person name="Gabel C."/>
            <person name="Fuchs M."/>
            <person name="Duesterhoeft A."/>
            <person name="Fritzc C."/>
            <person name="Holzer E."/>
            <person name="Moestl D."/>
            <person name="Hilbert H."/>
            <person name="Borzym K."/>
            <person name="Langer I."/>
            <person name="Beck A."/>
            <person name="Lehrach H."/>
            <person name="Reinhardt R."/>
            <person name="Pohl T.M."/>
            <person name="Eger P."/>
            <person name="Zimmermann W."/>
            <person name="Wedler H."/>
            <person name="Wambutt R."/>
            <person name="Purnelle B."/>
            <person name="Goffeau A."/>
            <person name="Cadieu E."/>
            <person name="Dreano S."/>
            <person name="Gloux S."/>
            <person name="Lelaure V."/>
            <person name="Mottier S."/>
            <person name="Galibert F."/>
            <person name="Aves S.J."/>
            <person name="Xiang Z."/>
            <person name="Hunt C."/>
            <person name="Moore K."/>
            <person name="Hurst S.M."/>
            <person name="Lucas M."/>
            <person name="Rochet M."/>
            <person name="Gaillardin C."/>
            <person name="Tallada V.A."/>
            <person name="Garzon A."/>
            <person name="Thode G."/>
            <person name="Daga R.R."/>
            <person name="Cruzado L."/>
            <person name="Jimenez J."/>
            <person name="Sanchez M."/>
            <person name="del Rey F."/>
            <person name="Benito J."/>
            <person name="Dominguez A."/>
            <person name="Revuelta J.L."/>
            <person name="Moreno S."/>
            <person name="Armstrong J."/>
            <person name="Forsburg S.L."/>
            <person name="Cerutti L."/>
            <person name="Lowe T."/>
            <person name="McCombie W.R."/>
            <person name="Paulsen I."/>
            <person name="Potashkin J."/>
            <person name="Shpakovski G.V."/>
            <person name="Ussery D."/>
            <person name="Barrell B.G."/>
            <person name="Nurse P."/>
        </authorList>
    </citation>
    <scope>NUCLEOTIDE SEQUENCE [LARGE SCALE GENOMIC DNA]</scope>
    <source>
        <strain>972 / ATCC 24843</strain>
    </source>
</reference>
<reference key="3">
    <citation type="journal article" date="1996" name="EMBO J.">
        <title>A novel S phase inhibitor in fission yeast.</title>
        <authorList>
            <person name="Woollard A."/>
            <person name="Basi G."/>
            <person name="Nurse P."/>
        </authorList>
    </citation>
    <scope>INTERACTION WITH SPD1</scope>
</reference>
<reference key="4">
    <citation type="journal article" date="2006" name="J. Biol. Chem.">
        <title>The Schizosaccharomyces pombe replication inhibitor Spd1 regulates ribonucleotide reductase activity and dNTPs by binding to the large Cdc22 subunit.</title>
        <authorList>
            <person name="Hakansson P."/>
            <person name="Dahl L."/>
            <person name="Chilkova O."/>
            <person name="Domkin V."/>
            <person name="Thelander L."/>
        </authorList>
    </citation>
    <scope>FUNCTION</scope>
    <scope>INTERACTION WITH CDC22</scope>
</reference>
<proteinExistence type="evidence at protein level"/>
<sequence length="811" mass="91999">MFVYKRDGRQEKVAFDKITARVSRLCYGLDSDHVDPVEITQKVISGVYPGVTTIELDNLAAETAATMTTKHPDYAILAARIAVSNLHKQTEKVFSTVVQQLHDYVNPKTDKPAPMISDKIYDIVMKHKDELDSAIIYDRDFTYNFFGFKTLERSYLLRIDGKVAERPQHMIMRVAVGIHGEDIEAAIETYNLMSQRYFTHASPTLFNAGTPRPQLSSCFLVTMKDDSIEGIYDTLKMCAMISKTAGGIGINIHNIRATGSYIAGTNGTSNGIVPMIRVYNNTARYVDQGGNKRPGAFAAYLEPWHADVMDFLELRKTHGNEDFRAREMFYALWIPDLFMQRVERNEQWTFFCPNEAPGLADVWGDEFVALYEKYEKENRGRRSLPAQKVWYAILQSQVETGNPFMLYKDSCNRKSNQKNVGTIRCSNLCTEIVEYSSPDEVAVCNLASVALPTFIKDGKYNFQKLHDVVKVVTRNLNKIIDVNYYPVPEARRSNMRHRPVGLGVQGLADAFFALRLPFESAGAKKLNIQIFETIYHAALEASCEIAQVEGTYESYEGSPASQGILQYDMWNVNPTDLWDWAELKEKIAKHGIRNSLLVAPMPTASTSQILGFNECFEPYTSNMYQRRVLSGEFQIVNPWLLKDLVERDLWNEDMKNKLVMLDGSIQAIPEIPQDLKDLYKTVWEISQKTVIDYAADRGPFIDQSQSLNIHLKDPSYGKITSMHFYGWKKGLKTGMYYLRTMAASAAIKFTVDPVALRARNEESNEENKKPVIKNGKAEISAEPTKEEIDIYNEKVLACSIKNPEACEMCSA</sequence>
<gene>
    <name type="primary">cdc22</name>
    <name type="ORF">SPAC1F7.05</name>
</gene>
<organism>
    <name type="scientific">Schizosaccharomyces pombe (strain 972 / ATCC 24843)</name>
    <name type="common">Fission yeast</name>
    <dbReference type="NCBI Taxonomy" id="284812"/>
    <lineage>
        <taxon>Eukaryota</taxon>
        <taxon>Fungi</taxon>
        <taxon>Dikarya</taxon>
        <taxon>Ascomycota</taxon>
        <taxon>Taphrinomycotina</taxon>
        <taxon>Schizosaccharomycetes</taxon>
        <taxon>Schizosaccharomycetales</taxon>
        <taxon>Schizosaccharomycetaceae</taxon>
        <taxon>Schizosaccharomyces</taxon>
    </lineage>
</organism>